<name>A4_SHEEP</name>
<comment type="function">
    <text evidence="1 2">Functions as a cell surface receptor and performs physiological functions on the surface of neurons relevant to neurite growth, neuronal adhesion and axonogenesis. Interaction between APP molecules on neighboring cells promotes synaptogenesis. Involved in cell mobility and transcription regulation through protein-protein interactions (By similarity). Can promote transcription activation through binding to APBB1-KAT5 and inhibit Notch signaling through interaction with Numb (By similarity). Couples to apoptosis-inducing pathways such as those mediated by G(o) and JIP (By similarity). Inhibits G(o)-alpha ATPase activity (By similarity). Acts as a kinesin I membrane receptor, mediating the axonal transport of beta-secretase and presenilin 1 (By similarity). By acting as a kinesin I membrane receptor, plays a role in axonal anterograde transport of cargo towards synapses in axons (By similarity). May be involved in copper homeostasis/oxidative stress through copper ion reduction (By similarity). In vitro, copper-metallated APP induces neuronal death directly or is potentiated through Cu(2+)-mediated low-density lipoprotein oxidation (By similarity). Can regulate neurite outgrowth through binding to components of the extracellular matrix such as heparin and collagen I and IV. Induces a AGER-dependent pathway that involves activation of p38 MAPK, resulting in internalization of amyloid-beta peptide and mitochondrial dysfunction in cultured cortical neurons. Provides Cu(2+) ions for GPC1 which are required for release of nitric oxide (NO) and subsequent degradation of the heparan sulfate chains on GPC1 (By similarity).</text>
</comment>
<comment type="subunit">
    <text evidence="1 2 3">Binds, via its C-terminus, to the PID domain of several cytoplasmic proteins, including APBB family members, the APBA family, MAPK8IP1, SHC1 and NUMB and DAB1 (By similarity). Binding to DAB1 inhibits its serine phosphorylation (By similarity). Interacts (via NPXY motif) with DAB2 (via PID domain); the interaction is impaired by tyrosine phosphorylation of the NPXY motif. Also interacts with GPCR-like protein BPP, APPBP1, IB1, KNS2 (via its TPR domains), APPBP2 (via BaSS) and DDB1. In vitro, it binds MAPT via the MT-binding domains (By similarity). Associates with microtubules in the presence of ATP and in a kinesin-dependent manner (By similarity). Interacts, through a C-terminal domain, with GNAO1. Interacts with CPEB1, ANKS1B and AGER (By similarity). Interacts with ITM2B. Interacts with ITM2C. Interacts with IDE. Can form homodimers; dimerization is enhanced in the presence of Cu(2+) ions. Can form homodimers; this is promoted by heparin binding (By similarity). Interacts with SORL1 (via N-terminal ectodomain); this interaction retains APP in the trans-Golgi network and reduces processing into soluble APP-alpha and amyloid-beta peptides (By similarity). Interacts with PLD3 (By similarity). Interacts with VDAC1 (By similarity). Interacts with NSG1; could regulate APP processing (By similarity). Amyloid-beta protein 42 interacts with FPR2 (By similarity). Interacts with LRRK2 (By similarity). Interacts (via cytoplasmic domain) with KIF5B (By similarity). Interacts (via C-terminus) with APBB2/FE65L1 (via C-terminus) (By similarity). Interacts (via intracellular domain) with APBB3 (By similarity).</text>
</comment>
<comment type="subcellular location">
    <subcellularLocation>
        <location evidence="2">Cell membrane</location>
        <topology evidence="2">Single-pass type I membrane protein</topology>
    </subcellularLocation>
    <subcellularLocation>
        <location evidence="2">Membrane</location>
        <topology evidence="2">Single-pass type I membrane protein</topology>
    </subcellularLocation>
    <subcellularLocation>
        <location evidence="2">Perikaryon</location>
    </subcellularLocation>
    <subcellularLocation>
        <location evidence="2">Cell projection</location>
        <location evidence="2">Growth cone</location>
    </subcellularLocation>
    <subcellularLocation>
        <location evidence="2">Membrane</location>
        <location evidence="2">Clathrin-coated pit</location>
    </subcellularLocation>
    <subcellularLocation>
        <location evidence="2">Early endosome</location>
    </subcellularLocation>
    <subcellularLocation>
        <location evidence="2">Cytoplasmic vesicle</location>
    </subcellularLocation>
    <text evidence="2">Cell surface protein that rapidly becomes internalized via clathrin-coated pits. Only a minor proportion is present at the cell membrane; most of the protein is present in intracellular vesicles. During maturation, the immature APP (N-glycosylated in the endoplasmic reticulum) moves to the Golgi complex where complete maturation occurs (O-glycosylated and sulfated). After alpha-secretase cleavage, soluble APP is released into the extracellular space and the C-terminal is internalized to endosomes and lysosomes. Some APP accumulates in secretory transport vesicles leaving the late Golgi compartment and returns to the cell surface.</text>
</comment>
<comment type="subcellular location">
    <molecule>Soluble APP-beta</molecule>
    <subcellularLocation>
        <location evidence="2">Secreted</location>
    </subcellularLocation>
</comment>
<comment type="subcellular location">
    <molecule>Amyloid-beta protein 42</molecule>
    <subcellularLocation>
        <location evidence="2">Cell surface</location>
    </subcellularLocation>
    <text evidence="2">Associates with FPR2 at the cell surface and the complex is then rapidly internalized.</text>
</comment>
<comment type="subcellular location">
    <molecule>Gamma-secretase C-terminal fragment 59</molecule>
    <subcellularLocation>
        <location evidence="2">Nucleus</location>
    </subcellularLocation>
    <subcellularLocation>
        <location evidence="2">Cytoplasm</location>
    </subcellularLocation>
    <text evidence="2 3">Located to both the cytoplasm and nuclei of neurons. It can be translocated to the nucleus through association with APBB1 (Fe65). In dopaminergic neurons, the phosphorylated form is localized to the nucleus (By similarity).</text>
</comment>
<comment type="PTM">
    <text evidence="2">Proteolytically processed under normal cellular conditions. Cleavage either by alpha-secretase, beta-secretase or theta-secretase leads to generation and extracellular release of soluble APP peptides, S-APP-alpha and S-APP-beta, and the retention of corresponding membrane-anchored C-terminal fragments, C80, C83 and C99. Subsequent processing of C80 and C83 by gamma-secretase yields P3 peptides. This is the major secretory pathway and is non-amyloidogenic. Alternatively, presenilin/nicastrin-mediated gamma-secretase processing of C99 releases the amyloid-beta proteins, amyloid-beta protein 40 and amyloid-beta protein 42, major components of amyloid plaques, and the cytotoxic C-terminal fragments, gamma-CTF(50), gamma-CTF(57) and gamma-CTF(59). PSEN1 cleavage is more efficient with C83 than with C99 as substrate (in vitro). Amyloid-beta protein 40 and Amyloid-beta protein 42 are cleaved by ACE. Many other minor amyloid-beta peptides, amyloid-beta 1-X peptides, are found in cerebral spinal fluid (CSF) including the amyloid-beta X-15 peptides, produced from the cleavage by alpha-secretase.</text>
</comment>
<comment type="similarity">
    <text evidence="5">Belongs to the APP family.</text>
</comment>
<proteinExistence type="evidence at transcript level"/>
<organism>
    <name type="scientific">Ovis aries</name>
    <name type="common">Sheep</name>
    <dbReference type="NCBI Taxonomy" id="9940"/>
    <lineage>
        <taxon>Eukaryota</taxon>
        <taxon>Metazoa</taxon>
        <taxon>Chordata</taxon>
        <taxon>Craniata</taxon>
        <taxon>Vertebrata</taxon>
        <taxon>Euteleostomi</taxon>
        <taxon>Mammalia</taxon>
        <taxon>Eutheria</taxon>
        <taxon>Laurasiatheria</taxon>
        <taxon>Artiodactyla</taxon>
        <taxon>Ruminantia</taxon>
        <taxon>Pecora</taxon>
        <taxon>Bovidae</taxon>
        <taxon>Caprinae</taxon>
        <taxon>Ovis</taxon>
    </lineage>
</organism>
<feature type="chain" id="PRO_0000226243" description="Amyloid-beta precursor protein">
    <location>
        <begin position="1" status="less than"/>
        <end position="58" status="greater than"/>
    </location>
</feature>
<feature type="chain" id="PRO_0000000185" description="Soluble APP-beta" evidence="1">
    <location>
        <begin position="1" status="less than"/>
        <end position="5"/>
    </location>
</feature>
<feature type="chain" id="PRO_0000000186" description="CTF-alpha" evidence="1">
    <location>
        <begin position="6"/>
        <end position="58" status="greater than"/>
    </location>
</feature>
<feature type="chain" id="PRO_0000000187" description="Amyloid-beta protein 42" evidence="2">
    <location>
        <begin position="6"/>
        <end position="47"/>
    </location>
</feature>
<feature type="chain" id="PRO_0000000188" description="Amyloid-beta protein 40" evidence="2">
    <location>
        <begin position="6"/>
        <end position="45"/>
    </location>
</feature>
<feature type="chain" id="PRO_0000000189" description="Gamma-secretase C-terminal fragment 59" evidence="1">
    <location>
        <begin position="46"/>
        <end position="58" status="greater than"/>
    </location>
</feature>
<feature type="chain" id="PRO_0000000190" description="Gamma-secretase C-terminal fragment 57" evidence="1">
    <location>
        <begin position="48"/>
        <end position="58" status="greater than"/>
    </location>
</feature>
<feature type="topological domain" description="Extracellular" evidence="4">
    <location>
        <begin position="1" status="less than"/>
        <end position="33"/>
    </location>
</feature>
<feature type="transmembrane region" description="Helical" evidence="4">
    <location>
        <begin position="34"/>
        <end position="57"/>
    </location>
</feature>
<feature type="topological domain" description="Cytoplasmic" evidence="4">
    <location>
        <begin position="58"/>
        <end position="58" status="greater than"/>
    </location>
</feature>
<feature type="binding site" evidence="2">
    <location>
        <position position="11"/>
    </location>
    <ligand>
        <name>Cu(2+)</name>
        <dbReference type="ChEBI" id="CHEBI:29036"/>
    </ligand>
</feature>
<feature type="binding site" evidence="2">
    <location>
        <position position="11"/>
    </location>
    <ligand>
        <name>Zn(2+)</name>
        <dbReference type="ChEBI" id="CHEBI:29105"/>
    </ligand>
</feature>
<feature type="binding site" evidence="2">
    <location>
        <position position="15"/>
    </location>
    <ligand>
        <name>Cu(2+)</name>
        <dbReference type="ChEBI" id="CHEBI:29036"/>
    </ligand>
</feature>
<feature type="binding site" evidence="2">
    <location>
        <position position="15"/>
    </location>
    <ligand>
        <name>Zn(2+)</name>
        <dbReference type="ChEBI" id="CHEBI:29105"/>
    </ligand>
</feature>
<feature type="binding site" evidence="2">
    <location>
        <position position="18"/>
    </location>
    <ligand>
        <name>Cu(2+)</name>
        <dbReference type="ChEBI" id="CHEBI:29036"/>
    </ligand>
</feature>
<feature type="binding site" evidence="2">
    <location>
        <position position="18"/>
    </location>
    <ligand>
        <name>Zn(2+)</name>
        <dbReference type="ChEBI" id="CHEBI:29105"/>
    </ligand>
</feature>
<feature type="binding site" evidence="2">
    <location>
        <position position="19"/>
    </location>
    <ligand>
        <name>Cu(2+)</name>
        <dbReference type="ChEBI" id="CHEBI:29036"/>
    </ligand>
</feature>
<feature type="binding site" evidence="2">
    <location>
        <position position="19"/>
    </location>
    <ligand>
        <name>Zn(2+)</name>
        <dbReference type="ChEBI" id="CHEBI:29105"/>
    </ligand>
</feature>
<feature type="site" description="Cleavage; by ACE" evidence="2">
    <location>
        <begin position="12"/>
        <end position="13"/>
    </location>
</feature>
<feature type="non-terminal residue">
    <location>
        <position position="1"/>
    </location>
</feature>
<feature type="non-terminal residue">
    <location>
        <position position="58"/>
    </location>
</feature>
<reference key="1">
    <citation type="journal article" date="1991" name="Brain Res. Mol. Brain Res.">
        <title>Conservation of the sequence of the Alzheimer's disease amyloid peptide in dog, polar bear and five other mammals by cross-species polymerase chain reaction analysis.</title>
        <authorList>
            <person name="Johnstone E.M."/>
            <person name="Chaney M.O."/>
            <person name="Norris F.H."/>
            <person name="Pascual R."/>
            <person name="Little S.P."/>
        </authorList>
    </citation>
    <scope>NUCLEOTIDE SEQUENCE [MRNA]</scope>
    <source>
        <tissue>Heart</tissue>
    </source>
</reference>
<sequence length="58" mass="6300">SEVKMDAEFRHDSGYEVHHQKLVFFAEDVGSNKGAIIGLMVGGVVIATVIVITLVMLK</sequence>
<gene>
    <name type="primary">APP</name>
</gene>
<dbReference type="EMBL" id="X56130">
    <property type="protein sequence ID" value="CAA39595.1"/>
    <property type="molecule type" value="mRNA"/>
</dbReference>
<dbReference type="STRING" id="9940.ENSOARP00000016162"/>
<dbReference type="PaxDb" id="9940-ENSOARP00000016162"/>
<dbReference type="eggNOG" id="KOG3540">
    <property type="taxonomic scope" value="Eukaryota"/>
</dbReference>
<dbReference type="Proteomes" id="UP000002356">
    <property type="component" value="Unplaced"/>
</dbReference>
<dbReference type="GO" id="GO:0009986">
    <property type="term" value="C:cell surface"/>
    <property type="evidence" value="ECO:0007669"/>
    <property type="project" value="UniProtKB-SubCell"/>
</dbReference>
<dbReference type="GO" id="GO:0005905">
    <property type="term" value="C:clathrin-coated pit"/>
    <property type="evidence" value="ECO:0007669"/>
    <property type="project" value="UniProtKB-SubCell"/>
</dbReference>
<dbReference type="GO" id="GO:0005769">
    <property type="term" value="C:early endosome"/>
    <property type="evidence" value="ECO:0000250"/>
    <property type="project" value="UniProtKB"/>
</dbReference>
<dbReference type="GO" id="GO:0005576">
    <property type="term" value="C:extracellular region"/>
    <property type="evidence" value="ECO:0007669"/>
    <property type="project" value="UniProtKB-SubCell"/>
</dbReference>
<dbReference type="GO" id="GO:0005794">
    <property type="term" value="C:Golgi apparatus"/>
    <property type="evidence" value="ECO:0007669"/>
    <property type="project" value="TreeGrafter"/>
</dbReference>
<dbReference type="GO" id="GO:0005798">
    <property type="term" value="C:Golgi-associated vesicle"/>
    <property type="evidence" value="ECO:0000250"/>
    <property type="project" value="UniProtKB"/>
</dbReference>
<dbReference type="GO" id="GO:0030426">
    <property type="term" value="C:growth cone"/>
    <property type="evidence" value="ECO:0007669"/>
    <property type="project" value="UniProtKB-SubCell"/>
</dbReference>
<dbReference type="GO" id="GO:0045121">
    <property type="term" value="C:membrane raft"/>
    <property type="evidence" value="ECO:0007669"/>
    <property type="project" value="TreeGrafter"/>
</dbReference>
<dbReference type="GO" id="GO:0005634">
    <property type="term" value="C:nucleus"/>
    <property type="evidence" value="ECO:0007669"/>
    <property type="project" value="UniProtKB-SubCell"/>
</dbReference>
<dbReference type="GO" id="GO:0043204">
    <property type="term" value="C:perikaryon"/>
    <property type="evidence" value="ECO:0007669"/>
    <property type="project" value="UniProtKB-SubCell"/>
</dbReference>
<dbReference type="GO" id="GO:0005886">
    <property type="term" value="C:plasma membrane"/>
    <property type="evidence" value="ECO:0007669"/>
    <property type="project" value="UniProtKB-SubCell"/>
</dbReference>
<dbReference type="GO" id="GO:0055037">
    <property type="term" value="C:recycling endosome"/>
    <property type="evidence" value="ECO:0000250"/>
    <property type="project" value="UniProtKB"/>
</dbReference>
<dbReference type="GO" id="GO:0046872">
    <property type="term" value="F:metal ion binding"/>
    <property type="evidence" value="ECO:0007669"/>
    <property type="project" value="UniProtKB-KW"/>
</dbReference>
<dbReference type="GO" id="GO:0030546">
    <property type="term" value="F:signaling receptor activator activity"/>
    <property type="evidence" value="ECO:0007669"/>
    <property type="project" value="TreeGrafter"/>
</dbReference>
<dbReference type="GO" id="GO:0005102">
    <property type="term" value="F:signaling receptor binding"/>
    <property type="evidence" value="ECO:0007669"/>
    <property type="project" value="TreeGrafter"/>
</dbReference>
<dbReference type="GO" id="GO:0007409">
    <property type="term" value="P:axonogenesis"/>
    <property type="evidence" value="ECO:0007669"/>
    <property type="project" value="TreeGrafter"/>
</dbReference>
<dbReference type="GO" id="GO:0007417">
    <property type="term" value="P:central nervous system development"/>
    <property type="evidence" value="ECO:0007669"/>
    <property type="project" value="TreeGrafter"/>
</dbReference>
<dbReference type="GO" id="GO:0050890">
    <property type="term" value="P:cognition"/>
    <property type="evidence" value="ECO:0000250"/>
    <property type="project" value="UniProtKB"/>
</dbReference>
<dbReference type="CDD" id="cd21707">
    <property type="entry name" value="JMTM_APP"/>
    <property type="match status" value="1"/>
</dbReference>
<dbReference type="FunFam" id="4.10.230.10:FF:000001">
    <property type="entry name" value="Amyloid beta A4 protein"/>
    <property type="match status" value="1"/>
</dbReference>
<dbReference type="Gene3D" id="4.10.230.10">
    <property type="entry name" value="Amyloidogenic glycoprotein, amyloid-beta peptide"/>
    <property type="match status" value="1"/>
</dbReference>
<dbReference type="InterPro" id="IPR008155">
    <property type="entry name" value="Amyloid_glyco"/>
</dbReference>
<dbReference type="InterPro" id="IPR013803">
    <property type="entry name" value="Amyloid_glyco_Abeta"/>
</dbReference>
<dbReference type="InterPro" id="IPR037071">
    <property type="entry name" value="Amyloid_glyco_Abeta_sf"/>
</dbReference>
<dbReference type="PANTHER" id="PTHR23103">
    <property type="entry name" value="ALZHEIMER'S DISEASE BETA-AMYLOID RELATED"/>
    <property type="match status" value="1"/>
</dbReference>
<dbReference type="PANTHER" id="PTHR23103:SF7">
    <property type="entry name" value="AMYLOID-BETA PRECURSOR PROTEIN"/>
    <property type="match status" value="1"/>
</dbReference>
<dbReference type="Pfam" id="PF03494">
    <property type="entry name" value="Beta-APP"/>
    <property type="match status" value="1"/>
</dbReference>
<dbReference type="PRINTS" id="PR00204">
    <property type="entry name" value="BETAAMYLOID"/>
</dbReference>
<keyword id="KW-0034">Amyloid</keyword>
<keyword id="KW-1003">Cell membrane</keyword>
<keyword id="KW-0966">Cell projection</keyword>
<keyword id="KW-0168">Coated pit</keyword>
<keyword id="KW-0186">Copper</keyword>
<keyword id="KW-0963">Cytoplasm</keyword>
<keyword id="KW-0968">Cytoplasmic vesicle</keyword>
<keyword id="KW-0967">Endosome</keyword>
<keyword id="KW-0472">Membrane</keyword>
<keyword id="KW-0479">Metal-binding</keyword>
<keyword id="KW-0539">Nucleus</keyword>
<keyword id="KW-1185">Reference proteome</keyword>
<keyword id="KW-0964">Secreted</keyword>
<keyword id="KW-0812">Transmembrane</keyword>
<keyword id="KW-1133">Transmembrane helix</keyword>
<keyword id="KW-0862">Zinc</keyword>
<evidence type="ECO:0000250" key="1"/>
<evidence type="ECO:0000250" key="2">
    <source>
        <dbReference type="UniProtKB" id="P05067"/>
    </source>
</evidence>
<evidence type="ECO:0000250" key="3">
    <source>
        <dbReference type="UniProtKB" id="P12023"/>
    </source>
</evidence>
<evidence type="ECO:0000255" key="4"/>
<evidence type="ECO:0000305" key="5"/>
<protein>
    <recommendedName>
        <fullName evidence="2">Amyloid-beta precursor protein</fullName>
    </recommendedName>
    <alternativeName>
        <fullName>ABPP</fullName>
        <shortName>APP</shortName>
    </alternativeName>
    <alternativeName>
        <fullName>Alzheimer disease amyloid A4 protein homolog</fullName>
    </alternativeName>
    <alternativeName>
        <fullName>Alzheimer disease amyloid protein</fullName>
    </alternativeName>
    <alternativeName>
        <fullName evidence="5">Amyloid precursor protein</fullName>
    </alternativeName>
    <alternativeName>
        <fullName evidence="3">Amyloid-beta (A4) precursor protein</fullName>
    </alternativeName>
    <alternativeName>
        <fullName>Amyloid-beta A4 protein</fullName>
    </alternativeName>
    <component>
        <recommendedName>
            <fullName>Soluble APP-beta</fullName>
            <shortName>S-APP-beta</shortName>
        </recommendedName>
    </component>
    <component>
        <recommendedName>
            <fullName>CTF-alpha</fullName>
        </recommendedName>
    </component>
    <component>
        <recommendedName>
            <fullName>Amyloid-beta protein 42</fullName>
            <shortName>Abeta42</shortName>
        </recommendedName>
        <alternativeName>
            <fullName>Beta-APP42</fullName>
        </alternativeName>
    </component>
    <component>
        <recommendedName>
            <fullName>Amyloid-beta protein 40</fullName>
            <shortName>Abeta40</shortName>
        </recommendedName>
        <alternativeName>
            <fullName>Beta-APP40</fullName>
        </alternativeName>
    </component>
    <component>
        <recommendedName>
            <fullName>Gamma-secretase C-terminal fragment 59</fullName>
        </recommendedName>
        <alternativeName>
            <fullName>Gamma-CTF(59)</fullName>
        </alternativeName>
    </component>
    <component>
        <recommendedName>
            <fullName>Gamma-secretase C-terminal fragment 57</fullName>
        </recommendedName>
        <alternativeName>
            <fullName>Gamma-CTF(57)</fullName>
        </alternativeName>
    </component>
</protein>
<accession>Q28757</accession>